<protein>
    <recommendedName>
        <fullName evidence="3">Parbolysin P7</fullName>
    </recommendedName>
    <alternativeName>
        <fullName>Parbolysin 7</fullName>
    </alternativeName>
</protein>
<feature type="chain" id="PRO_0000454515" description="Parbolysin P7" evidence="5">
    <location>
        <begin position="1"/>
        <end position="92"/>
    </location>
</feature>
<feature type="disulfide bond" evidence="2">
    <location>
        <begin position="15"/>
        <end position="36"/>
    </location>
</feature>
<feature type="disulfide bond" evidence="2">
    <location>
        <begin position="21"/>
        <end position="32"/>
    </location>
</feature>
<feature type="disulfide bond" evidence="2">
    <location>
        <begin position="46"/>
        <end position="59"/>
    </location>
</feature>
<sequence>WPAYPGPNGIRSSVCQTKLGCGKKNLATKGVCKAFCLGRKRFWQKCGKNGSSGKGSKICNAVLAHAVEKAGKGLIKVTDMAVAAIIKYAGKK</sequence>
<comment type="function">
    <text evidence="1">Cytolysin that shows hemolytic activity (on bovine erythrocytes, HC(50)=5.75 mg/ml). This hemolytic activity is completely inhibited by small unilamelar vesicles composed of PC/PG, PC/PI and PC/PS in 1:1 molar ratios (with at least 100 mg/ml concentration).</text>
</comment>
<comment type="subcellular location">
    <subcellularLocation>
        <location evidence="5">Secreted</location>
    </subcellularLocation>
</comment>
<comment type="tissue specificity">
    <text evidence="5">Localized within the skin and proboscis and are most readily isolated from body mucus secretions.</text>
</comment>
<comment type="similarity">
    <text evidence="4">Belongs to the worm cytolysin family.</text>
</comment>
<reference key="1">
    <citation type="journal article" date="2015" name="Toxicon">
        <title>Recombinant expression and predicted structure of parborlysin, a cytolytic protein from the Antarctic heteronemertine Parborlasia corrugatus.</title>
        <authorList>
            <person name="Butala M."/>
            <person name="Sega D."/>
            <person name="Tomc B."/>
            <person name="Podlesek Z."/>
            <person name="Kem W.R."/>
            <person name="Kupper F.C."/>
            <person name="Turk T."/>
        </authorList>
    </citation>
    <scope>NUCLEOTIDE SEQUENCE [MRNA]</scope>
</reference>
<evidence type="ECO:0000250" key="1">
    <source>
        <dbReference type="UniProtKB" id="A0A0N7HUN6"/>
    </source>
</evidence>
<evidence type="ECO:0000250" key="2">
    <source>
        <dbReference type="UniProtKB" id="P01527"/>
    </source>
</evidence>
<evidence type="ECO:0000303" key="3">
    <source>
    </source>
</evidence>
<evidence type="ECO:0000305" key="4"/>
<evidence type="ECO:0000305" key="5">
    <source>
    </source>
</evidence>
<dbReference type="EMBL" id="KT693320">
    <property type="protein sequence ID" value="ALI86911.1"/>
    <property type="molecule type" value="mRNA"/>
</dbReference>
<dbReference type="GO" id="GO:0005576">
    <property type="term" value="C:extracellular region"/>
    <property type="evidence" value="ECO:0007669"/>
    <property type="project" value="UniProtKB-SubCell"/>
</dbReference>
<dbReference type="GO" id="GO:0090729">
    <property type="term" value="F:toxin activity"/>
    <property type="evidence" value="ECO:0007669"/>
    <property type="project" value="UniProtKB-KW"/>
</dbReference>
<dbReference type="GO" id="GO:0031640">
    <property type="term" value="P:killing of cells of another organism"/>
    <property type="evidence" value="ECO:0007669"/>
    <property type="project" value="UniProtKB-KW"/>
</dbReference>
<proteinExistence type="inferred from homology"/>
<name>CXP7_PARCG</name>
<organism>
    <name type="scientific">Parborlasia corrugatus</name>
    <name type="common">Antarctic nemertean worm</name>
    <dbReference type="NCBI Taxonomy" id="187802"/>
    <lineage>
        <taxon>Eukaryota</taxon>
        <taxon>Metazoa</taxon>
        <taxon>Spiralia</taxon>
        <taxon>Lophotrochozoa</taxon>
        <taxon>Nemertea</taxon>
        <taxon>Pilidiophora</taxon>
        <taxon>Heteronemertea</taxon>
        <taxon>Lineidae</taxon>
        <taxon>Parborlasia</taxon>
    </lineage>
</organism>
<keyword id="KW-0204">Cytolysis</keyword>
<keyword id="KW-1015">Disulfide bond</keyword>
<keyword id="KW-0354">Hemolysis</keyword>
<keyword id="KW-0964">Secreted</keyword>
<keyword id="KW-0800">Toxin</keyword>
<accession>A0A0P0CHY3</accession>